<evidence type="ECO:0000250" key="1"/>
<evidence type="ECO:0000255" key="2">
    <source>
        <dbReference type="HAMAP-Rule" id="MF_01057"/>
    </source>
</evidence>
<gene>
    <name evidence="2" type="primary">trmB</name>
    <name type="ordered locus">lin1656</name>
</gene>
<comment type="function">
    <text evidence="2">Catalyzes the formation of N(7)-methylguanine at position 46 (m7G46) in tRNA.</text>
</comment>
<comment type="catalytic activity">
    <reaction evidence="2">
        <text>guanosine(46) in tRNA + S-adenosyl-L-methionine = N(7)-methylguanosine(46) in tRNA + S-adenosyl-L-homocysteine</text>
        <dbReference type="Rhea" id="RHEA:42708"/>
        <dbReference type="Rhea" id="RHEA-COMP:10188"/>
        <dbReference type="Rhea" id="RHEA-COMP:10189"/>
        <dbReference type="ChEBI" id="CHEBI:57856"/>
        <dbReference type="ChEBI" id="CHEBI:59789"/>
        <dbReference type="ChEBI" id="CHEBI:74269"/>
        <dbReference type="ChEBI" id="CHEBI:74480"/>
        <dbReference type="EC" id="2.1.1.33"/>
    </reaction>
</comment>
<comment type="pathway">
    <text evidence="2">tRNA modification; N(7)-methylguanine-tRNA biosynthesis.</text>
</comment>
<comment type="similarity">
    <text evidence="2">Belongs to the class I-like SAM-binding methyltransferase superfamily. TrmB family.</text>
</comment>
<reference key="1">
    <citation type="journal article" date="2001" name="Science">
        <title>Comparative genomics of Listeria species.</title>
        <authorList>
            <person name="Glaser P."/>
            <person name="Frangeul L."/>
            <person name="Buchrieser C."/>
            <person name="Rusniok C."/>
            <person name="Amend A."/>
            <person name="Baquero F."/>
            <person name="Berche P."/>
            <person name="Bloecker H."/>
            <person name="Brandt P."/>
            <person name="Chakraborty T."/>
            <person name="Charbit A."/>
            <person name="Chetouani F."/>
            <person name="Couve E."/>
            <person name="de Daruvar A."/>
            <person name="Dehoux P."/>
            <person name="Domann E."/>
            <person name="Dominguez-Bernal G."/>
            <person name="Duchaud E."/>
            <person name="Durant L."/>
            <person name="Dussurget O."/>
            <person name="Entian K.-D."/>
            <person name="Fsihi H."/>
            <person name="Garcia-del Portillo F."/>
            <person name="Garrido P."/>
            <person name="Gautier L."/>
            <person name="Goebel W."/>
            <person name="Gomez-Lopez N."/>
            <person name="Hain T."/>
            <person name="Hauf J."/>
            <person name="Jackson D."/>
            <person name="Jones L.-M."/>
            <person name="Kaerst U."/>
            <person name="Kreft J."/>
            <person name="Kuhn M."/>
            <person name="Kunst F."/>
            <person name="Kurapkat G."/>
            <person name="Madueno E."/>
            <person name="Maitournam A."/>
            <person name="Mata Vicente J."/>
            <person name="Ng E."/>
            <person name="Nedjari H."/>
            <person name="Nordsiek G."/>
            <person name="Novella S."/>
            <person name="de Pablos B."/>
            <person name="Perez-Diaz J.-C."/>
            <person name="Purcell R."/>
            <person name="Remmel B."/>
            <person name="Rose M."/>
            <person name="Schlueter T."/>
            <person name="Simoes N."/>
            <person name="Tierrez A."/>
            <person name="Vazquez-Boland J.-A."/>
            <person name="Voss H."/>
            <person name="Wehland J."/>
            <person name="Cossart P."/>
        </authorList>
    </citation>
    <scope>NUCLEOTIDE SEQUENCE [LARGE SCALE GENOMIC DNA]</scope>
    <source>
        <strain>ATCC BAA-680 / CLIP 11262</strain>
    </source>
</reference>
<sequence length="214" mass="24924">MRVKHKPWAKDRLEEFPAIYIKNPEDFKGRWQEVFGNNNPIHIEIGSGKGQFISGMAKANPEINYIGIEMIESVLVSALDKAIEAEVPNLRLVARDAKLLEESFEKGEIAQIYLNFSDPWPKKRHTKRRLTNPTFLTIYERLLPKAGEIHFKTDNRSLFEYSLVAFSEYNMLLTFVSLDLHNSDYEGNIKTEYEEKFSAKGFPIYRLEAKFDRD</sequence>
<proteinExistence type="inferred from homology"/>
<name>TRMB_LISIN</name>
<accession>Q92B94</accession>
<dbReference type="EC" id="2.1.1.33" evidence="2"/>
<dbReference type="EMBL" id="AL596169">
    <property type="protein sequence ID" value="CAC96887.1"/>
    <property type="molecule type" value="Genomic_DNA"/>
</dbReference>
<dbReference type="PIR" id="AG1639">
    <property type="entry name" value="AG1639"/>
</dbReference>
<dbReference type="RefSeq" id="WP_003772072.1">
    <property type="nucleotide sequence ID" value="NC_003212.1"/>
</dbReference>
<dbReference type="SMR" id="Q92B94"/>
<dbReference type="STRING" id="272626.gene:17565987"/>
<dbReference type="GeneID" id="93235038"/>
<dbReference type="KEGG" id="lin:lin1656"/>
<dbReference type="eggNOG" id="COG0220">
    <property type="taxonomic scope" value="Bacteria"/>
</dbReference>
<dbReference type="HOGENOM" id="CLU_050910_2_1_9"/>
<dbReference type="OrthoDB" id="9802090at2"/>
<dbReference type="UniPathway" id="UPA00989"/>
<dbReference type="Proteomes" id="UP000002513">
    <property type="component" value="Chromosome"/>
</dbReference>
<dbReference type="GO" id="GO:0043527">
    <property type="term" value="C:tRNA methyltransferase complex"/>
    <property type="evidence" value="ECO:0007669"/>
    <property type="project" value="TreeGrafter"/>
</dbReference>
<dbReference type="GO" id="GO:0008176">
    <property type="term" value="F:tRNA (guanine(46)-N7)-methyltransferase activity"/>
    <property type="evidence" value="ECO:0007669"/>
    <property type="project" value="UniProtKB-UniRule"/>
</dbReference>
<dbReference type="CDD" id="cd02440">
    <property type="entry name" value="AdoMet_MTases"/>
    <property type="match status" value="1"/>
</dbReference>
<dbReference type="FunFam" id="3.40.50.150:FF:000035">
    <property type="entry name" value="tRNA (guanine-N(7)-)-methyltransferase"/>
    <property type="match status" value="1"/>
</dbReference>
<dbReference type="Gene3D" id="3.40.50.150">
    <property type="entry name" value="Vaccinia Virus protein VP39"/>
    <property type="match status" value="1"/>
</dbReference>
<dbReference type="HAMAP" id="MF_01057">
    <property type="entry name" value="tRNA_methyltr_TrmB"/>
    <property type="match status" value="1"/>
</dbReference>
<dbReference type="InterPro" id="IPR029063">
    <property type="entry name" value="SAM-dependent_MTases_sf"/>
</dbReference>
<dbReference type="InterPro" id="IPR003358">
    <property type="entry name" value="tRNA_(Gua-N-7)_MeTrfase_Trmb"/>
</dbReference>
<dbReference type="InterPro" id="IPR055361">
    <property type="entry name" value="tRNA_methyltr_TrmB_bact"/>
</dbReference>
<dbReference type="NCBIfam" id="NF001080">
    <property type="entry name" value="PRK00121.2-2"/>
    <property type="match status" value="1"/>
</dbReference>
<dbReference type="NCBIfam" id="TIGR00091">
    <property type="entry name" value="tRNA (guanosine(46)-N7)-methyltransferase TrmB"/>
    <property type="match status" value="1"/>
</dbReference>
<dbReference type="PANTHER" id="PTHR23417">
    <property type="entry name" value="3-DEOXY-D-MANNO-OCTULOSONIC-ACID TRANSFERASE/TRNA GUANINE-N 7 - -METHYLTRANSFERASE"/>
    <property type="match status" value="1"/>
</dbReference>
<dbReference type="PANTHER" id="PTHR23417:SF14">
    <property type="entry name" value="PENTACOTRIPEPTIDE-REPEAT REGION OF PRORP DOMAIN-CONTAINING PROTEIN"/>
    <property type="match status" value="1"/>
</dbReference>
<dbReference type="Pfam" id="PF02390">
    <property type="entry name" value="Methyltransf_4"/>
    <property type="match status" value="1"/>
</dbReference>
<dbReference type="SUPFAM" id="SSF53335">
    <property type="entry name" value="S-adenosyl-L-methionine-dependent methyltransferases"/>
    <property type="match status" value="1"/>
</dbReference>
<dbReference type="PROSITE" id="PS51625">
    <property type="entry name" value="SAM_MT_TRMB"/>
    <property type="match status" value="1"/>
</dbReference>
<protein>
    <recommendedName>
        <fullName evidence="2">tRNA (guanine-N(7)-)-methyltransferase</fullName>
        <ecNumber evidence="2">2.1.1.33</ecNumber>
    </recommendedName>
    <alternativeName>
        <fullName evidence="2">tRNA (guanine(46)-N(7))-methyltransferase</fullName>
    </alternativeName>
    <alternativeName>
        <fullName evidence="2">tRNA(m7G46)-methyltransferase</fullName>
    </alternativeName>
</protein>
<organism>
    <name type="scientific">Listeria innocua serovar 6a (strain ATCC BAA-680 / CLIP 11262)</name>
    <dbReference type="NCBI Taxonomy" id="272626"/>
    <lineage>
        <taxon>Bacteria</taxon>
        <taxon>Bacillati</taxon>
        <taxon>Bacillota</taxon>
        <taxon>Bacilli</taxon>
        <taxon>Bacillales</taxon>
        <taxon>Listeriaceae</taxon>
        <taxon>Listeria</taxon>
    </lineage>
</organism>
<keyword id="KW-0489">Methyltransferase</keyword>
<keyword id="KW-0949">S-adenosyl-L-methionine</keyword>
<keyword id="KW-0808">Transferase</keyword>
<keyword id="KW-0819">tRNA processing</keyword>
<feature type="chain" id="PRO_0000171343" description="tRNA (guanine-N(7)-)-methyltransferase">
    <location>
        <begin position="1"/>
        <end position="214"/>
    </location>
</feature>
<feature type="active site" evidence="1">
    <location>
        <position position="118"/>
    </location>
</feature>
<feature type="binding site" evidence="2">
    <location>
        <position position="44"/>
    </location>
    <ligand>
        <name>S-adenosyl-L-methionine</name>
        <dbReference type="ChEBI" id="CHEBI:59789"/>
    </ligand>
</feature>
<feature type="binding site" evidence="2">
    <location>
        <position position="69"/>
    </location>
    <ligand>
        <name>S-adenosyl-L-methionine</name>
        <dbReference type="ChEBI" id="CHEBI:59789"/>
    </ligand>
</feature>
<feature type="binding site" evidence="2">
    <location>
        <position position="96"/>
    </location>
    <ligand>
        <name>S-adenosyl-L-methionine</name>
        <dbReference type="ChEBI" id="CHEBI:59789"/>
    </ligand>
</feature>
<feature type="binding site" evidence="2">
    <location>
        <position position="118"/>
    </location>
    <ligand>
        <name>S-adenosyl-L-methionine</name>
        <dbReference type="ChEBI" id="CHEBI:59789"/>
    </ligand>
</feature>
<feature type="binding site" evidence="2">
    <location>
        <position position="122"/>
    </location>
    <ligand>
        <name>substrate</name>
    </ligand>
</feature>
<feature type="binding site" evidence="2">
    <location>
        <position position="154"/>
    </location>
    <ligand>
        <name>substrate</name>
    </ligand>
</feature>
<feature type="binding site" evidence="2">
    <location>
        <begin position="191"/>
        <end position="194"/>
    </location>
    <ligand>
        <name>substrate</name>
    </ligand>
</feature>